<proteinExistence type="evidence at protein level"/>
<evidence type="ECO:0000250" key="1">
    <source>
        <dbReference type="UniProtKB" id="P14779"/>
    </source>
</evidence>
<evidence type="ECO:0000250" key="2">
    <source>
        <dbReference type="UniProtKB" id="Q9Y8G7"/>
    </source>
</evidence>
<evidence type="ECO:0000255" key="3">
    <source>
        <dbReference type="PROSITE-ProRule" id="PRU00088"/>
    </source>
</evidence>
<evidence type="ECO:0000255" key="4">
    <source>
        <dbReference type="PROSITE-ProRule" id="PRU00716"/>
    </source>
</evidence>
<evidence type="ECO:0000256" key="5">
    <source>
        <dbReference type="SAM" id="MobiDB-lite"/>
    </source>
</evidence>
<evidence type="ECO:0000269" key="6">
    <source>
    </source>
</evidence>
<evidence type="ECO:0000303" key="7">
    <source>
    </source>
</evidence>
<evidence type="ECO:0000305" key="8"/>
<sequence length="1049" mass="116032">MKDMDCIPGPKPLPVVGNLFDLDLDNALQSIIRMADEFGPLFQITINGQKQIFATSQALVDELCDETRFHKAVMGGVEKLRMLAQDGLFTAHHGERGWGIAHRILMPAFGPLRIRDMFEDMSDVAHQLCFKWARQGSSASINIAEDFTRLTLDTIALCTMSFRLNSYYNSETMHPFVQSMLYVLKEADLQATLPGVANCVRVKAQRRMSKHIQAMRNIAGDIIKGRRDKPEPVDDLLNTLLNGRDPVTGEGMSDELIISNIITFLVAGHETTSGLLSFTFYYLLQHPHVLEQARNEVDEVVGVGPITVQHLAKLPYIDAVMKESLRLMPTAPAFTVTPKKPEVVGGKWMVNTGQSVHVLLPVCLRDEAVFGPDAGEFRPTRMLEENFSKLPPNSWKPFGNGERGCIGRAFAWQEAQLVVASVLQTFDLVAEDPYYKLRIKETLTIKPDGFRVRATLRRGQSATALSQHNMSAGATASPGSSTHLAGDENGQDTAGGQPISFFYGSNSGTCKALAHRLASTMMTRGFTDQHLAQLDSAVDNLPRDQPTIIVTTTYDGQPTDDAKKFLAWLESGNVPSLHGVSYAVFGCGHQDWTKTFYRIPILIDDLMHKAGATRLTTRGTANAAVSDLFSDLEVWEETNLLPALREKFYLCNSSDFEPLDPHQLQISISKPARVGMHRDLVEGKVTAIRTLTSPGVPEKRHVEFQIPSEMALRPGDHVNILPVNPPCSVLRALARFSLASDHSITFESSNALDLPQATPVSAAELFSSYLELSQPATRINLKSLASATPSDDDKKELLHFHDSYDSLIRDKRVSVLDLLEHFTSITLPIATFISMLPVLRVRTYSLSMAPSFKPLHCSLTFSVVNEPAWSGNGRYLGVGSNYLASLTPGSILYVSPRPAKDAFHLPTDQSSNPIIMICAGSGLAPFRSFIQDRMAWLQQGKPLAKALLFFGCRGPHLDDLYHDELSEFESAGVVEVRRAYSKVPNHYLAKGCRYAQHRLLTETETIQDMWAHNATLYLCGSANLAKGVKAVLENMLGTLSEERYITEIF</sequence>
<gene>
    <name evidence="7" type="primary">CYP505E4</name>
    <name type="ORF">PCAMFM013_S004g000414</name>
</gene>
<dbReference type="EC" id="1.14.14.1" evidence="6"/>
<dbReference type="EC" id="1.6.2.4" evidence="6"/>
<dbReference type="EMBL" id="HG793137">
    <property type="protein sequence ID" value="CRL20473.1"/>
    <property type="molecule type" value="Genomic_DNA"/>
</dbReference>
<dbReference type="SMR" id="A0A0G4P2K0"/>
<dbReference type="STRING" id="1429867.A0A0G4P2K0"/>
<dbReference type="Proteomes" id="UP000053732">
    <property type="component" value="Unassembled WGS sequence"/>
</dbReference>
<dbReference type="GO" id="GO:0005829">
    <property type="term" value="C:cytosol"/>
    <property type="evidence" value="ECO:0007669"/>
    <property type="project" value="TreeGrafter"/>
</dbReference>
<dbReference type="GO" id="GO:0070330">
    <property type="term" value="F:aromatase activity"/>
    <property type="evidence" value="ECO:0007669"/>
    <property type="project" value="InterPro"/>
</dbReference>
<dbReference type="GO" id="GO:0050660">
    <property type="term" value="F:flavin adenine dinucleotide binding"/>
    <property type="evidence" value="ECO:0007669"/>
    <property type="project" value="TreeGrafter"/>
</dbReference>
<dbReference type="GO" id="GO:0010181">
    <property type="term" value="F:FMN binding"/>
    <property type="evidence" value="ECO:0007669"/>
    <property type="project" value="InterPro"/>
</dbReference>
<dbReference type="GO" id="GO:0020037">
    <property type="term" value="F:heme binding"/>
    <property type="evidence" value="ECO:0007669"/>
    <property type="project" value="InterPro"/>
</dbReference>
<dbReference type="GO" id="GO:0005506">
    <property type="term" value="F:iron ion binding"/>
    <property type="evidence" value="ECO:0007669"/>
    <property type="project" value="InterPro"/>
</dbReference>
<dbReference type="GO" id="GO:0003958">
    <property type="term" value="F:NADPH-hemoprotein reductase activity"/>
    <property type="evidence" value="ECO:0007669"/>
    <property type="project" value="UniProtKB-EC"/>
</dbReference>
<dbReference type="GO" id="GO:0043386">
    <property type="term" value="P:mycotoxin biosynthetic process"/>
    <property type="evidence" value="ECO:0007669"/>
    <property type="project" value="UniProtKB-ARBA"/>
</dbReference>
<dbReference type="CDD" id="cd06206">
    <property type="entry name" value="bifunctional_CYPOR"/>
    <property type="match status" value="1"/>
</dbReference>
<dbReference type="CDD" id="cd11068">
    <property type="entry name" value="CYP120A1"/>
    <property type="match status" value="1"/>
</dbReference>
<dbReference type="FunFam" id="1.10.630.10:FF:000040">
    <property type="entry name" value="Bifunctional cytochrome P450/NADPH--P450 reductase"/>
    <property type="match status" value="1"/>
</dbReference>
<dbReference type="Gene3D" id="3.40.50.360">
    <property type="match status" value="1"/>
</dbReference>
<dbReference type="Gene3D" id="1.10.630.10">
    <property type="entry name" value="Cytochrome P450"/>
    <property type="match status" value="1"/>
</dbReference>
<dbReference type="Gene3D" id="1.20.990.10">
    <property type="entry name" value="NADPH-cytochrome p450 Reductase, Chain A, domain 3"/>
    <property type="match status" value="1"/>
</dbReference>
<dbReference type="Gene3D" id="3.40.50.80">
    <property type="entry name" value="Nucleotide-binding domain of ferredoxin-NADP reductase (FNR) module"/>
    <property type="match status" value="1"/>
</dbReference>
<dbReference type="Gene3D" id="2.40.30.10">
    <property type="entry name" value="Translation factors"/>
    <property type="match status" value="1"/>
</dbReference>
<dbReference type="InterPro" id="IPR023206">
    <property type="entry name" value="Bifunctional_P450_P450_red"/>
</dbReference>
<dbReference type="InterPro" id="IPR003097">
    <property type="entry name" value="CysJ-like_FAD-binding"/>
</dbReference>
<dbReference type="InterPro" id="IPR001128">
    <property type="entry name" value="Cyt_P450"/>
</dbReference>
<dbReference type="InterPro" id="IPR017972">
    <property type="entry name" value="Cyt_P450_CS"/>
</dbReference>
<dbReference type="InterPro" id="IPR002401">
    <property type="entry name" value="Cyt_P450_E_grp-I"/>
</dbReference>
<dbReference type="InterPro" id="IPR036396">
    <property type="entry name" value="Cyt_P450_sf"/>
</dbReference>
<dbReference type="InterPro" id="IPR017927">
    <property type="entry name" value="FAD-bd_FR_type"/>
</dbReference>
<dbReference type="InterPro" id="IPR008254">
    <property type="entry name" value="Flavodoxin/NO_synth"/>
</dbReference>
<dbReference type="InterPro" id="IPR029039">
    <property type="entry name" value="Flavoprotein-like_sf"/>
</dbReference>
<dbReference type="InterPro" id="IPR039261">
    <property type="entry name" value="FNR_nucleotide-bd"/>
</dbReference>
<dbReference type="InterPro" id="IPR023173">
    <property type="entry name" value="NADPH_Cyt_P450_Rdtase_alpha"/>
</dbReference>
<dbReference type="InterPro" id="IPR001433">
    <property type="entry name" value="OxRdtase_FAD/NAD-bd"/>
</dbReference>
<dbReference type="InterPro" id="IPR017938">
    <property type="entry name" value="Riboflavin_synthase-like_b-brl"/>
</dbReference>
<dbReference type="PANTHER" id="PTHR19384:SF127">
    <property type="entry name" value="BIFUNCTIONAL CYTOCHROME P450_NADPH--P450 REDUCTASE"/>
    <property type="match status" value="1"/>
</dbReference>
<dbReference type="PANTHER" id="PTHR19384">
    <property type="entry name" value="NITRIC OXIDE SYNTHASE-RELATED"/>
    <property type="match status" value="1"/>
</dbReference>
<dbReference type="Pfam" id="PF00667">
    <property type="entry name" value="FAD_binding_1"/>
    <property type="match status" value="1"/>
</dbReference>
<dbReference type="Pfam" id="PF00258">
    <property type="entry name" value="Flavodoxin_1"/>
    <property type="match status" value="1"/>
</dbReference>
<dbReference type="Pfam" id="PF00175">
    <property type="entry name" value="NAD_binding_1"/>
    <property type="match status" value="1"/>
</dbReference>
<dbReference type="Pfam" id="PF00067">
    <property type="entry name" value="p450"/>
    <property type="match status" value="1"/>
</dbReference>
<dbReference type="PIRSF" id="PIRSF000209">
    <property type="entry name" value="Bifunctional_P450_P450R"/>
    <property type="match status" value="1"/>
</dbReference>
<dbReference type="PRINTS" id="PR00463">
    <property type="entry name" value="EP450I"/>
</dbReference>
<dbReference type="PRINTS" id="PR00385">
    <property type="entry name" value="P450"/>
</dbReference>
<dbReference type="SUPFAM" id="SSF48264">
    <property type="entry name" value="Cytochrome P450"/>
    <property type="match status" value="1"/>
</dbReference>
<dbReference type="SUPFAM" id="SSF52343">
    <property type="entry name" value="Ferredoxin reductase-like, C-terminal NADP-linked domain"/>
    <property type="match status" value="1"/>
</dbReference>
<dbReference type="SUPFAM" id="SSF52218">
    <property type="entry name" value="Flavoproteins"/>
    <property type="match status" value="1"/>
</dbReference>
<dbReference type="SUPFAM" id="SSF63380">
    <property type="entry name" value="Riboflavin synthase domain-like"/>
    <property type="match status" value="1"/>
</dbReference>
<dbReference type="PROSITE" id="PS00086">
    <property type="entry name" value="CYTOCHROME_P450"/>
    <property type="match status" value="1"/>
</dbReference>
<dbReference type="PROSITE" id="PS51384">
    <property type="entry name" value="FAD_FR"/>
    <property type="match status" value="1"/>
</dbReference>
<dbReference type="PROSITE" id="PS50902">
    <property type="entry name" value="FLAVODOXIN_LIKE"/>
    <property type="match status" value="1"/>
</dbReference>
<protein>
    <recommendedName>
        <fullName evidence="7">Self-sufficient cytochrome P450 monooxygenase CYP505E4</fullName>
    </recommendedName>
    <alternativeName>
        <fullName evidence="7">Bifunctional cytochrome P450/NADPH--P450 reductase CYP505E4</fullName>
    </alternativeName>
    <domain>
        <recommendedName>
            <fullName evidence="7">Cytochrome P450 monooxygenase</fullName>
            <ecNumber evidence="6">1.14.14.1</ecNumber>
        </recommendedName>
    </domain>
    <domain>
        <recommendedName>
            <fullName evidence="7">NADPH--cytochrome P450 reductase</fullName>
            <ecNumber evidence="6">1.6.2.4</ecNumber>
        </recommendedName>
    </domain>
</protein>
<accession>A0A0G4P2K0</accession>
<keyword id="KW-0249">Electron transport</keyword>
<keyword id="KW-0274">FAD</keyword>
<keyword id="KW-0285">Flavoprotein</keyword>
<keyword id="KW-0288">FMN</keyword>
<keyword id="KW-0349">Heme</keyword>
<keyword id="KW-0408">Iron</keyword>
<keyword id="KW-0479">Metal-binding</keyword>
<keyword id="KW-0503">Monooxygenase</keyword>
<keyword id="KW-0521">NADP</keyword>
<keyword id="KW-0560">Oxidoreductase</keyword>
<keyword id="KW-1185">Reference proteome</keyword>
<keyword id="KW-0813">Transport</keyword>
<feature type="chain" id="PRO_0000459041" description="Self-sufficient cytochrome P450 monooxygenase CYP505E4">
    <location>
        <begin position="1"/>
        <end position="1049"/>
    </location>
</feature>
<feature type="domain" description="Flavodoxin-like" evidence="3">
    <location>
        <begin position="499"/>
        <end position="640"/>
    </location>
</feature>
<feature type="domain" description="FAD-binding FR-type" evidence="4">
    <location>
        <begin position="678"/>
        <end position="906"/>
    </location>
</feature>
<feature type="region of interest" description="Disordered" evidence="5">
    <location>
        <begin position="461"/>
        <end position="491"/>
    </location>
</feature>
<feature type="compositionally biased region" description="Polar residues" evidence="5">
    <location>
        <begin position="461"/>
        <end position="470"/>
    </location>
</feature>
<feature type="compositionally biased region" description="Low complexity" evidence="5">
    <location>
        <begin position="471"/>
        <end position="482"/>
    </location>
</feature>
<feature type="binding site" description="axial binding residue" evidence="1">
    <location>
        <position position="405"/>
    </location>
    <ligand>
        <name>heme</name>
        <dbReference type="ChEBI" id="CHEBI:30413"/>
    </ligand>
    <ligandPart>
        <name>Fe</name>
        <dbReference type="ChEBI" id="CHEBI:18248"/>
    </ligandPart>
</feature>
<feature type="binding site" evidence="3">
    <location>
        <begin position="505"/>
        <end position="509"/>
    </location>
    <ligand>
        <name>FMN</name>
        <dbReference type="ChEBI" id="CHEBI:58210"/>
    </ligand>
</feature>
<feature type="binding site" evidence="3">
    <location>
        <begin position="584"/>
        <end position="616"/>
    </location>
    <ligand>
        <name>FMN</name>
        <dbReference type="ChEBI" id="CHEBI:58210"/>
    </ligand>
</feature>
<reference key="1">
    <citation type="journal article" date="2014" name="Nat. Commun.">
        <title>Multiple recent horizontal transfers of a large genomic region in cheese making fungi.</title>
        <authorList>
            <person name="Cheeseman K."/>
            <person name="Ropars J."/>
            <person name="Renault P."/>
            <person name="Dupont J."/>
            <person name="Gouzy J."/>
            <person name="Branca A."/>
            <person name="Abraham A.-L."/>
            <person name="Ceppi M."/>
            <person name="Conseiller E."/>
            <person name="Debuchy R."/>
            <person name="Malagnac F."/>
            <person name="Goarin A."/>
            <person name="Silar P."/>
            <person name="Lacoste S."/>
            <person name="Sallet E."/>
            <person name="Bensimon A."/>
            <person name="Giraud T."/>
            <person name="Brygoo Y."/>
        </authorList>
    </citation>
    <scope>NUCLEOTIDE SEQUENCE [LARGE SCALE GENOMIC DNA]</scope>
    <source>
        <strain>FM 013</strain>
    </source>
</reference>
<reference key="2">
    <citation type="journal article" date="2023" name="Appl. Microbiol. Biotechnol.">
        <title>Delineation of the CYP505E subfamily of fungal self-sufficient in-chain hydroxylating cytochrome P450 monooxygenases.</title>
        <authorList>
            <person name="Smit M.S."/>
            <person name="Maseme M.J."/>
            <person name="van Marwijk J."/>
            <person name="Aschenbrenner J.C."/>
            <person name="Opperman D.J."/>
        </authorList>
    </citation>
    <scope>FUNCTION</scope>
    <scope>CATALYTIC ACTIVITY</scope>
</reference>
<comment type="function">
    <text evidence="6">Self-sufficient cytochrome P450 monooxygenase that catalyzes the regioselective in-chain hydroxylation of alkanes, fatty alcohols, and fatty acids at the omega-7 position (PubMed:36607403). Performs hydroxylation of C10-C16 n-alkanes and C12 and C14 fatty alcohols; and thereby enables the one step biocatalytic synthesis of rare alcohols such as 5-dodecanol and 7-tetradecanol (PubMed:36607403). Converts 1-dodecanol into 1,5-dodecanediol as major product with very little sub-terminally hydroxylated products with the 1,4-dodecanediol and 1,6-dodecanediol more abundant (PubMed:36607403). Converts dodecanoic acid to 5-hydroxydodecanoic acid which can be further converted into delta-dodecalactone by lactonization of the 5-hydroxy acid at low pH (PubMed:36607403). Also gives sub-terminal hydroxylation of dodecanoic acid with 9-hydroxydodecanoic acid being the second most abundant product (PubMed:36607403). Does not show any significant activity toward tetradecanoic acid (PubMed:36607403).</text>
</comment>
<comment type="catalytic activity">
    <reaction evidence="6">
        <text>2 oxidized [cytochrome P450] + NADPH = 2 reduced [cytochrome P450] + NADP(+) + H(+)</text>
        <dbReference type="Rhea" id="RHEA:24040"/>
        <dbReference type="Rhea" id="RHEA-COMP:14627"/>
        <dbReference type="Rhea" id="RHEA-COMP:14628"/>
        <dbReference type="ChEBI" id="CHEBI:15378"/>
        <dbReference type="ChEBI" id="CHEBI:55376"/>
        <dbReference type="ChEBI" id="CHEBI:57783"/>
        <dbReference type="ChEBI" id="CHEBI:58349"/>
        <dbReference type="ChEBI" id="CHEBI:60344"/>
        <dbReference type="EC" id="1.6.2.4"/>
    </reaction>
</comment>
<comment type="catalytic activity">
    <reaction evidence="6">
        <text>an organic molecule + reduced [NADPH--hemoprotein reductase] + O2 = an alcohol + oxidized [NADPH--hemoprotein reductase] + H2O + H(+)</text>
        <dbReference type="Rhea" id="RHEA:17149"/>
        <dbReference type="Rhea" id="RHEA-COMP:11964"/>
        <dbReference type="Rhea" id="RHEA-COMP:11965"/>
        <dbReference type="ChEBI" id="CHEBI:15377"/>
        <dbReference type="ChEBI" id="CHEBI:15378"/>
        <dbReference type="ChEBI" id="CHEBI:15379"/>
        <dbReference type="ChEBI" id="CHEBI:30879"/>
        <dbReference type="ChEBI" id="CHEBI:57618"/>
        <dbReference type="ChEBI" id="CHEBI:58210"/>
        <dbReference type="ChEBI" id="CHEBI:142491"/>
        <dbReference type="EC" id="1.14.14.1"/>
    </reaction>
</comment>
<comment type="catalytic activity">
    <reaction evidence="6">
        <text>dodecanoate + reduced [NADPH--hemoprotein reductase] + O2 = 5-hydroxydodecanoate + oxidized [NADPH--hemoprotein reductase] + H2O + H(+)</text>
        <dbReference type="Rhea" id="RHEA:76723"/>
        <dbReference type="Rhea" id="RHEA-COMP:11964"/>
        <dbReference type="Rhea" id="RHEA-COMP:11965"/>
        <dbReference type="ChEBI" id="CHEBI:15377"/>
        <dbReference type="ChEBI" id="CHEBI:15378"/>
        <dbReference type="ChEBI" id="CHEBI:15379"/>
        <dbReference type="ChEBI" id="CHEBI:18262"/>
        <dbReference type="ChEBI" id="CHEBI:57618"/>
        <dbReference type="ChEBI" id="CHEBI:58210"/>
        <dbReference type="ChEBI" id="CHEBI:195418"/>
    </reaction>
    <physiologicalReaction direction="left-to-right" evidence="6">
        <dbReference type="Rhea" id="RHEA:76724"/>
    </physiologicalReaction>
</comment>
<comment type="catalytic activity">
    <reaction evidence="6">
        <text>dodecan-1-ol + reduced [NADPH--hemoprotein reductase] + O2 = 1,5-dodecanediol + oxidized [NADPH--hemoprotein reductase] + H2O + H(+)</text>
        <dbReference type="Rhea" id="RHEA:76759"/>
        <dbReference type="Rhea" id="RHEA-COMP:11964"/>
        <dbReference type="Rhea" id="RHEA-COMP:11965"/>
        <dbReference type="ChEBI" id="CHEBI:15377"/>
        <dbReference type="ChEBI" id="CHEBI:15378"/>
        <dbReference type="ChEBI" id="CHEBI:15379"/>
        <dbReference type="ChEBI" id="CHEBI:28878"/>
        <dbReference type="ChEBI" id="CHEBI:57618"/>
        <dbReference type="ChEBI" id="CHEBI:58210"/>
        <dbReference type="ChEBI" id="CHEBI:195414"/>
    </reaction>
    <physiologicalReaction direction="left-to-right" evidence="6">
        <dbReference type="Rhea" id="RHEA:76760"/>
    </physiologicalReaction>
</comment>
<comment type="catalytic activity">
    <reaction evidence="6">
        <text>dodecanoate + reduced [NADPH--hemoprotein reductase] + O2 = 9-hydroxydodecanoate + oxidized [NADPH--hemoprotein reductase] + H2O + H(+)</text>
        <dbReference type="Rhea" id="RHEA:66872"/>
        <dbReference type="Rhea" id="RHEA-COMP:11964"/>
        <dbReference type="Rhea" id="RHEA-COMP:11965"/>
        <dbReference type="ChEBI" id="CHEBI:15377"/>
        <dbReference type="ChEBI" id="CHEBI:15378"/>
        <dbReference type="ChEBI" id="CHEBI:15379"/>
        <dbReference type="ChEBI" id="CHEBI:18262"/>
        <dbReference type="ChEBI" id="CHEBI:57618"/>
        <dbReference type="ChEBI" id="CHEBI:58210"/>
        <dbReference type="ChEBI" id="CHEBI:167543"/>
    </reaction>
    <physiologicalReaction direction="left-to-right" evidence="6">
        <dbReference type="Rhea" id="RHEA:66873"/>
    </physiologicalReaction>
</comment>
<comment type="catalytic activity">
    <reaction evidence="6">
        <text>dodecan-1-ol + reduced [NADPH--hemoprotein reductase] + O2 = 1,4-dodecanediol + oxidized [NADPH--hemoprotein reductase] + H2O + H(+)</text>
        <dbReference type="Rhea" id="RHEA:76763"/>
        <dbReference type="Rhea" id="RHEA-COMP:11964"/>
        <dbReference type="Rhea" id="RHEA-COMP:11965"/>
        <dbReference type="ChEBI" id="CHEBI:15377"/>
        <dbReference type="ChEBI" id="CHEBI:15378"/>
        <dbReference type="ChEBI" id="CHEBI:15379"/>
        <dbReference type="ChEBI" id="CHEBI:28878"/>
        <dbReference type="ChEBI" id="CHEBI:57618"/>
        <dbReference type="ChEBI" id="CHEBI:58210"/>
        <dbReference type="ChEBI" id="CHEBI:195422"/>
    </reaction>
    <physiologicalReaction direction="left-to-right" evidence="6">
        <dbReference type="Rhea" id="RHEA:76764"/>
    </physiologicalReaction>
</comment>
<comment type="catalytic activity">
    <reaction evidence="6">
        <text>dodecan-1-ol + reduced [NADPH--hemoprotein reductase] + O2 = 1,6-dodecanediol + oxidized [NADPH--hemoprotein reductase] + H2O + H(+)</text>
        <dbReference type="Rhea" id="RHEA:76779"/>
        <dbReference type="Rhea" id="RHEA-COMP:11964"/>
        <dbReference type="Rhea" id="RHEA-COMP:11965"/>
        <dbReference type="ChEBI" id="CHEBI:15377"/>
        <dbReference type="ChEBI" id="CHEBI:15378"/>
        <dbReference type="ChEBI" id="CHEBI:15379"/>
        <dbReference type="ChEBI" id="CHEBI:28878"/>
        <dbReference type="ChEBI" id="CHEBI:57618"/>
        <dbReference type="ChEBI" id="CHEBI:58210"/>
        <dbReference type="ChEBI" id="CHEBI:195445"/>
    </reaction>
    <physiologicalReaction direction="left-to-right" evidence="6">
        <dbReference type="Rhea" id="RHEA:76780"/>
    </physiologicalReaction>
</comment>
<comment type="cofactor">
    <cofactor evidence="2">
        <name>FAD</name>
        <dbReference type="ChEBI" id="CHEBI:57692"/>
    </cofactor>
    <text evidence="2">Binds 1 FAD.</text>
</comment>
<comment type="cofactor">
    <cofactor evidence="2">
        <name>FMN</name>
        <dbReference type="ChEBI" id="CHEBI:58210"/>
    </cofactor>
    <text evidence="2">Binds 1 FMN.</text>
</comment>
<comment type="cofactor">
    <cofactor evidence="2">
        <name>heme</name>
        <dbReference type="ChEBI" id="CHEBI:30413"/>
    </cofactor>
</comment>
<comment type="similarity">
    <text evidence="8">In the N-terminal section; belongs to the cytochrome P450 family.</text>
</comment>
<organism>
    <name type="scientific">Penicillium camemberti (strain FM 013)</name>
    <dbReference type="NCBI Taxonomy" id="1429867"/>
    <lineage>
        <taxon>Eukaryota</taxon>
        <taxon>Fungi</taxon>
        <taxon>Dikarya</taxon>
        <taxon>Ascomycota</taxon>
        <taxon>Pezizomycotina</taxon>
        <taxon>Eurotiomycetes</taxon>
        <taxon>Eurotiomycetidae</taxon>
        <taxon>Eurotiales</taxon>
        <taxon>Aspergillaceae</taxon>
        <taxon>Penicillium</taxon>
    </lineage>
</organism>
<name>CYPE4_PENC3</name>